<dbReference type="EMBL" id="U14970">
    <property type="protein sequence ID" value="AAA85658.1"/>
    <property type="molecule type" value="mRNA"/>
</dbReference>
<dbReference type="EMBL" id="AB061853">
    <property type="protein sequence ID" value="BAB79493.1"/>
    <property type="molecule type" value="Genomic_DNA"/>
</dbReference>
<dbReference type="EMBL" id="AK311938">
    <property type="protein sequence ID" value="BAG34879.1"/>
    <property type="molecule type" value="mRNA"/>
</dbReference>
<dbReference type="EMBL" id="CH471135">
    <property type="protein sequence ID" value="EAW72581.1"/>
    <property type="molecule type" value="Genomic_DNA"/>
</dbReference>
<dbReference type="EMBL" id="BC015405">
    <property type="protein sequence ID" value="AAH15405.1"/>
    <property type="molecule type" value="mRNA"/>
</dbReference>
<dbReference type="EMBL" id="BC018151">
    <property type="protein sequence ID" value="AAH18151.1"/>
    <property type="molecule type" value="mRNA"/>
</dbReference>
<dbReference type="EMBL" id="AB007149">
    <property type="protein sequence ID" value="BAA25815.1"/>
    <property type="molecule type" value="Genomic_DNA"/>
</dbReference>
<dbReference type="CCDS" id="CCDS12978.1"/>
<dbReference type="PIR" id="S55916">
    <property type="entry name" value="S55916"/>
</dbReference>
<dbReference type="RefSeq" id="NP_001000.2">
    <property type="nucleotide sequence ID" value="NM_001009.3"/>
</dbReference>
<dbReference type="PDB" id="4UG0">
    <property type="method" value="EM"/>
    <property type="chains" value="SF=1-204"/>
</dbReference>
<dbReference type="PDB" id="4V6X">
    <property type="method" value="EM"/>
    <property type="resolution" value="5.00 A"/>
    <property type="chains" value="AF=1-204"/>
</dbReference>
<dbReference type="PDB" id="5A2Q">
    <property type="method" value="EM"/>
    <property type="resolution" value="3.90 A"/>
    <property type="chains" value="F=1-204"/>
</dbReference>
<dbReference type="PDB" id="5AJ0">
    <property type="method" value="EM"/>
    <property type="resolution" value="3.50 A"/>
    <property type="chains" value="BF=1-204"/>
</dbReference>
<dbReference type="PDB" id="5FLX">
    <property type="method" value="EM"/>
    <property type="resolution" value="3.90 A"/>
    <property type="chains" value="F=1-204"/>
</dbReference>
<dbReference type="PDB" id="5LKS">
    <property type="method" value="EM"/>
    <property type="resolution" value="3.60 A"/>
    <property type="chains" value="SF=1-204"/>
</dbReference>
<dbReference type="PDB" id="5OA3">
    <property type="method" value="EM"/>
    <property type="resolution" value="4.30 A"/>
    <property type="chains" value="F=1-204"/>
</dbReference>
<dbReference type="PDB" id="5T2C">
    <property type="method" value="EM"/>
    <property type="resolution" value="3.60 A"/>
    <property type="chains" value="As=1-204"/>
</dbReference>
<dbReference type="PDB" id="5VYC">
    <property type="method" value="X-ray"/>
    <property type="resolution" value="6.00 A"/>
    <property type="chains" value="F1/F2/F3/F4/F5/F6=1-204"/>
</dbReference>
<dbReference type="PDB" id="6FEC">
    <property type="method" value="EM"/>
    <property type="resolution" value="6.30 A"/>
    <property type="chains" value="U=14-204"/>
</dbReference>
<dbReference type="PDB" id="6G18">
    <property type="method" value="EM"/>
    <property type="resolution" value="3.60 A"/>
    <property type="chains" value="F=1-204"/>
</dbReference>
<dbReference type="PDB" id="6G4S">
    <property type="method" value="EM"/>
    <property type="resolution" value="4.00 A"/>
    <property type="chains" value="F=1-204"/>
</dbReference>
<dbReference type="PDB" id="6G4W">
    <property type="method" value="EM"/>
    <property type="resolution" value="4.50 A"/>
    <property type="chains" value="F=1-204"/>
</dbReference>
<dbReference type="PDB" id="6G51">
    <property type="method" value="EM"/>
    <property type="resolution" value="4.10 A"/>
    <property type="chains" value="F=1-204"/>
</dbReference>
<dbReference type="PDB" id="6G53">
    <property type="method" value="EM"/>
    <property type="resolution" value="4.50 A"/>
    <property type="chains" value="F=1-204"/>
</dbReference>
<dbReference type="PDB" id="6G5H">
    <property type="method" value="EM"/>
    <property type="resolution" value="3.60 A"/>
    <property type="chains" value="F=1-204"/>
</dbReference>
<dbReference type="PDB" id="6G5I">
    <property type="method" value="EM"/>
    <property type="resolution" value="3.50 A"/>
    <property type="chains" value="F=1-204"/>
</dbReference>
<dbReference type="PDB" id="6IP5">
    <property type="method" value="EM"/>
    <property type="resolution" value="3.90 A"/>
    <property type="chains" value="2r=1-204"/>
</dbReference>
<dbReference type="PDB" id="6IP6">
    <property type="method" value="EM"/>
    <property type="resolution" value="4.50 A"/>
    <property type="chains" value="2r=1-204"/>
</dbReference>
<dbReference type="PDB" id="6IP8">
    <property type="method" value="EM"/>
    <property type="resolution" value="3.90 A"/>
    <property type="chains" value="2r=1-204"/>
</dbReference>
<dbReference type="PDB" id="6OLE">
    <property type="method" value="EM"/>
    <property type="resolution" value="3.10 A"/>
    <property type="chains" value="SF=16-204"/>
</dbReference>
<dbReference type="PDB" id="6OLF">
    <property type="method" value="EM"/>
    <property type="resolution" value="3.90 A"/>
    <property type="chains" value="SF=16-204"/>
</dbReference>
<dbReference type="PDB" id="6OLG">
    <property type="method" value="EM"/>
    <property type="resolution" value="3.40 A"/>
    <property type="chains" value="BF=15-204"/>
</dbReference>
<dbReference type="PDB" id="6OLI">
    <property type="method" value="EM"/>
    <property type="resolution" value="3.50 A"/>
    <property type="chains" value="SF=16-204"/>
</dbReference>
<dbReference type="PDB" id="6OLZ">
    <property type="method" value="EM"/>
    <property type="resolution" value="3.90 A"/>
    <property type="chains" value="BF=15-204"/>
</dbReference>
<dbReference type="PDB" id="6OM0">
    <property type="method" value="EM"/>
    <property type="resolution" value="3.10 A"/>
    <property type="chains" value="SF=16-204"/>
</dbReference>
<dbReference type="PDB" id="6OM7">
    <property type="method" value="EM"/>
    <property type="resolution" value="3.70 A"/>
    <property type="chains" value="SF=16-204"/>
</dbReference>
<dbReference type="PDB" id="6QZP">
    <property type="method" value="EM"/>
    <property type="resolution" value="2.90 A"/>
    <property type="chains" value="SF=16-204"/>
</dbReference>
<dbReference type="PDB" id="6XA1">
    <property type="method" value="EM"/>
    <property type="resolution" value="2.80 A"/>
    <property type="chains" value="SF=16-204"/>
</dbReference>
<dbReference type="PDB" id="6Y0G">
    <property type="method" value="EM"/>
    <property type="resolution" value="3.20 A"/>
    <property type="chains" value="SF=1-204"/>
</dbReference>
<dbReference type="PDB" id="6Y2L">
    <property type="method" value="EM"/>
    <property type="resolution" value="3.00 A"/>
    <property type="chains" value="SF=1-204"/>
</dbReference>
<dbReference type="PDB" id="6Y57">
    <property type="method" value="EM"/>
    <property type="resolution" value="3.50 A"/>
    <property type="chains" value="SF=1-204"/>
</dbReference>
<dbReference type="PDB" id="6YBS">
    <property type="method" value="EM"/>
    <property type="resolution" value="3.10 A"/>
    <property type="chains" value="V=1-204"/>
</dbReference>
<dbReference type="PDB" id="6Z6L">
    <property type="method" value="EM"/>
    <property type="resolution" value="3.00 A"/>
    <property type="chains" value="SF=1-204"/>
</dbReference>
<dbReference type="PDB" id="6Z6M">
    <property type="method" value="EM"/>
    <property type="resolution" value="3.10 A"/>
    <property type="chains" value="SF=1-204"/>
</dbReference>
<dbReference type="PDB" id="6Z6N">
    <property type="method" value="EM"/>
    <property type="resolution" value="2.90 A"/>
    <property type="chains" value="SF=1-204"/>
</dbReference>
<dbReference type="PDB" id="6ZLW">
    <property type="method" value="EM"/>
    <property type="resolution" value="2.60 A"/>
    <property type="chains" value="K=1-204"/>
</dbReference>
<dbReference type="PDB" id="6ZM7">
    <property type="method" value="EM"/>
    <property type="resolution" value="2.70 A"/>
    <property type="chains" value="SF=1-204"/>
</dbReference>
<dbReference type="PDB" id="6ZME">
    <property type="method" value="EM"/>
    <property type="resolution" value="3.00 A"/>
    <property type="chains" value="SF=1-204"/>
</dbReference>
<dbReference type="PDB" id="6ZMI">
    <property type="method" value="EM"/>
    <property type="resolution" value="2.60 A"/>
    <property type="chains" value="SF=1-204"/>
</dbReference>
<dbReference type="PDB" id="6ZMO">
    <property type="method" value="EM"/>
    <property type="resolution" value="3.10 A"/>
    <property type="chains" value="SF=1-204"/>
</dbReference>
<dbReference type="PDB" id="6ZMT">
    <property type="method" value="EM"/>
    <property type="resolution" value="3.00 A"/>
    <property type="chains" value="K=1-204"/>
</dbReference>
<dbReference type="PDB" id="6ZMW">
    <property type="method" value="EM"/>
    <property type="resolution" value="3.70 A"/>
    <property type="chains" value="V=1-204"/>
</dbReference>
<dbReference type="PDB" id="6ZN5">
    <property type="method" value="EM"/>
    <property type="resolution" value="3.20 A"/>
    <property type="chains" value="K=16-204"/>
</dbReference>
<dbReference type="PDB" id="6ZOJ">
    <property type="method" value="EM"/>
    <property type="resolution" value="2.80 A"/>
    <property type="chains" value="F=1-204"/>
</dbReference>
<dbReference type="PDB" id="6ZOL">
    <property type="method" value="EM"/>
    <property type="resolution" value="2.80 A"/>
    <property type="chains" value="F=1-204"/>
</dbReference>
<dbReference type="PDB" id="6ZON">
    <property type="method" value="EM"/>
    <property type="resolution" value="3.00 A"/>
    <property type="chains" value="e=1-204"/>
</dbReference>
<dbReference type="PDB" id="6ZP4">
    <property type="method" value="EM"/>
    <property type="resolution" value="2.90 A"/>
    <property type="chains" value="e=1-204"/>
</dbReference>
<dbReference type="PDB" id="6ZUO">
    <property type="method" value="EM"/>
    <property type="resolution" value="3.10 A"/>
    <property type="chains" value="F=1-204"/>
</dbReference>
<dbReference type="PDB" id="6ZV6">
    <property type="method" value="EM"/>
    <property type="resolution" value="2.90 A"/>
    <property type="chains" value="F=1-204"/>
</dbReference>
<dbReference type="PDB" id="6ZVH">
    <property type="method" value="EM"/>
    <property type="resolution" value="2.90 A"/>
    <property type="chains" value="F=16-204"/>
</dbReference>
<dbReference type="PDB" id="6ZVJ">
    <property type="method" value="EM"/>
    <property type="resolution" value="3.80 A"/>
    <property type="chains" value="e=16-204"/>
</dbReference>
<dbReference type="PDB" id="6ZXD">
    <property type="method" value="EM"/>
    <property type="resolution" value="3.20 A"/>
    <property type="chains" value="F=1-204"/>
</dbReference>
<dbReference type="PDB" id="6ZXE">
    <property type="method" value="EM"/>
    <property type="resolution" value="3.00 A"/>
    <property type="chains" value="F=1-204"/>
</dbReference>
<dbReference type="PDB" id="6ZXF">
    <property type="method" value="EM"/>
    <property type="resolution" value="3.70 A"/>
    <property type="chains" value="F=1-204"/>
</dbReference>
<dbReference type="PDB" id="6ZXG">
    <property type="method" value="EM"/>
    <property type="resolution" value="2.60 A"/>
    <property type="chains" value="F=1-204"/>
</dbReference>
<dbReference type="PDB" id="6ZXH">
    <property type="method" value="EM"/>
    <property type="resolution" value="2.70 A"/>
    <property type="chains" value="F=1-204"/>
</dbReference>
<dbReference type="PDB" id="7A09">
    <property type="method" value="EM"/>
    <property type="resolution" value="3.50 A"/>
    <property type="chains" value="e=1-204"/>
</dbReference>
<dbReference type="PDB" id="7K5I">
    <property type="method" value="EM"/>
    <property type="resolution" value="2.90 A"/>
    <property type="chains" value="F=1-204"/>
</dbReference>
<dbReference type="PDB" id="7MQ8">
    <property type="method" value="EM"/>
    <property type="resolution" value="3.60 A"/>
    <property type="chains" value="L5=1-204"/>
</dbReference>
<dbReference type="PDB" id="7MQ9">
    <property type="method" value="EM"/>
    <property type="resolution" value="3.87 A"/>
    <property type="chains" value="L5=1-204"/>
</dbReference>
<dbReference type="PDB" id="7MQA">
    <property type="method" value="EM"/>
    <property type="resolution" value="2.70 A"/>
    <property type="chains" value="L5=1-204"/>
</dbReference>
<dbReference type="PDB" id="7QP6">
    <property type="method" value="EM"/>
    <property type="resolution" value="4.70 A"/>
    <property type="chains" value="V=1-204"/>
</dbReference>
<dbReference type="PDB" id="7QP7">
    <property type="method" value="EM"/>
    <property type="resolution" value="3.70 A"/>
    <property type="chains" value="V=1-204"/>
</dbReference>
<dbReference type="PDB" id="7R4X">
    <property type="method" value="EM"/>
    <property type="resolution" value="2.15 A"/>
    <property type="chains" value="F=1-204"/>
</dbReference>
<dbReference type="PDB" id="7TQL">
    <property type="method" value="EM"/>
    <property type="resolution" value="3.40 A"/>
    <property type="chains" value="K=16-204"/>
</dbReference>
<dbReference type="PDB" id="7WTT">
    <property type="method" value="EM"/>
    <property type="resolution" value="3.10 A"/>
    <property type="chains" value="F=1-204"/>
</dbReference>
<dbReference type="PDB" id="7WTU">
    <property type="method" value="EM"/>
    <property type="resolution" value="3.00 A"/>
    <property type="chains" value="F=1-204"/>
</dbReference>
<dbReference type="PDB" id="7WTV">
    <property type="method" value="EM"/>
    <property type="resolution" value="3.50 A"/>
    <property type="chains" value="F=1-204"/>
</dbReference>
<dbReference type="PDB" id="7WTW">
    <property type="method" value="EM"/>
    <property type="resolution" value="3.20 A"/>
    <property type="chains" value="F=1-204"/>
</dbReference>
<dbReference type="PDB" id="7WTX">
    <property type="method" value="EM"/>
    <property type="resolution" value="3.10 A"/>
    <property type="chains" value="F=1-204"/>
</dbReference>
<dbReference type="PDB" id="7WTZ">
    <property type="method" value="EM"/>
    <property type="resolution" value="3.00 A"/>
    <property type="chains" value="F=1-204"/>
</dbReference>
<dbReference type="PDB" id="7WU0">
    <property type="method" value="EM"/>
    <property type="resolution" value="3.30 A"/>
    <property type="chains" value="F=1-204"/>
</dbReference>
<dbReference type="PDB" id="7XNX">
    <property type="method" value="EM"/>
    <property type="resolution" value="2.70 A"/>
    <property type="chains" value="SF=1-204"/>
</dbReference>
<dbReference type="PDB" id="7XNY">
    <property type="method" value="EM"/>
    <property type="resolution" value="2.50 A"/>
    <property type="chains" value="SF=1-204"/>
</dbReference>
<dbReference type="PDB" id="8G5Y">
    <property type="method" value="EM"/>
    <property type="resolution" value="2.29 A"/>
    <property type="chains" value="SF=1-204"/>
</dbReference>
<dbReference type="PDB" id="8G5Z">
    <property type="method" value="EM"/>
    <property type="resolution" value="2.64 A"/>
    <property type="chains" value="SF=16-204"/>
</dbReference>
<dbReference type="PDB" id="8G60">
    <property type="method" value="EM"/>
    <property type="resolution" value="2.54 A"/>
    <property type="chains" value="SF=1-204"/>
</dbReference>
<dbReference type="PDB" id="8G61">
    <property type="method" value="EM"/>
    <property type="resolution" value="2.94 A"/>
    <property type="chains" value="SF=1-204"/>
</dbReference>
<dbReference type="PDB" id="8G6J">
    <property type="method" value="EM"/>
    <property type="resolution" value="2.80 A"/>
    <property type="chains" value="SF=1-204"/>
</dbReference>
<dbReference type="PDB" id="8GLP">
    <property type="method" value="EM"/>
    <property type="resolution" value="1.67 A"/>
    <property type="chains" value="SF=1-204"/>
</dbReference>
<dbReference type="PDB" id="8IFD">
    <property type="method" value="EM"/>
    <property type="resolution" value="2.59 A"/>
    <property type="chains" value="2r=1-204"/>
</dbReference>
<dbReference type="PDB" id="8IFE">
    <property type="method" value="EM"/>
    <property type="resolution" value="2.57 A"/>
    <property type="chains" value="2r=1-204"/>
</dbReference>
<dbReference type="PDB" id="8JDJ">
    <property type="method" value="EM"/>
    <property type="resolution" value="2.50 A"/>
    <property type="chains" value="2=1-204"/>
</dbReference>
<dbReference type="PDB" id="8JDK">
    <property type="method" value="EM"/>
    <property type="resolution" value="2.26 A"/>
    <property type="chains" value="2=1-204"/>
</dbReference>
<dbReference type="PDB" id="8JDL">
    <property type="method" value="EM"/>
    <property type="resolution" value="2.42 A"/>
    <property type="chains" value="2=1-204"/>
</dbReference>
<dbReference type="PDB" id="8JDM">
    <property type="method" value="EM"/>
    <property type="resolution" value="2.67 A"/>
    <property type="chains" value="2=1-204"/>
</dbReference>
<dbReference type="PDB" id="8K2C">
    <property type="method" value="EM"/>
    <property type="resolution" value="2.40 A"/>
    <property type="chains" value="SF=1-204"/>
</dbReference>
<dbReference type="PDB" id="8OZ0">
    <property type="method" value="EM"/>
    <property type="resolution" value="3.50 A"/>
    <property type="chains" value="f=1-204"/>
</dbReference>
<dbReference type="PDB" id="8PJ1">
    <property type="method" value="EM"/>
    <property type="resolution" value="3.40 A"/>
    <property type="chains" value="V=1-204"/>
</dbReference>
<dbReference type="PDB" id="8PJ2">
    <property type="method" value="EM"/>
    <property type="resolution" value="3.40 A"/>
    <property type="chains" value="V=1-204"/>
</dbReference>
<dbReference type="PDB" id="8PJ3">
    <property type="method" value="EM"/>
    <property type="resolution" value="3.70 A"/>
    <property type="chains" value="V=1-204"/>
</dbReference>
<dbReference type="PDB" id="8PJ4">
    <property type="method" value="EM"/>
    <property type="resolution" value="3.20 A"/>
    <property type="chains" value="V=1-204"/>
</dbReference>
<dbReference type="PDB" id="8PJ5">
    <property type="method" value="EM"/>
    <property type="resolution" value="2.90 A"/>
    <property type="chains" value="V=1-204"/>
</dbReference>
<dbReference type="PDB" id="8PJ6">
    <property type="method" value="EM"/>
    <property type="resolution" value="2.90 A"/>
    <property type="chains" value="V=1-204"/>
</dbReference>
<dbReference type="PDB" id="8PPK">
    <property type="method" value="EM"/>
    <property type="resolution" value="2.98 A"/>
    <property type="chains" value="F=1-204"/>
</dbReference>
<dbReference type="PDB" id="8PPL">
    <property type="method" value="EM"/>
    <property type="resolution" value="2.65 A"/>
    <property type="chains" value="AF=1-204"/>
</dbReference>
<dbReference type="PDB" id="8QOI">
    <property type="method" value="EM"/>
    <property type="resolution" value="1.90 A"/>
    <property type="chains" value="SF=1-204"/>
</dbReference>
<dbReference type="PDB" id="8T4S">
    <property type="method" value="EM"/>
    <property type="resolution" value="2.60 A"/>
    <property type="chains" value="F=1-204"/>
</dbReference>
<dbReference type="PDB" id="8UKB">
    <property type="method" value="EM"/>
    <property type="resolution" value="3.05 A"/>
    <property type="chains" value="SF=16-204"/>
</dbReference>
<dbReference type="PDB" id="8XP2">
    <property type="method" value="EM"/>
    <property type="resolution" value="3.20 A"/>
    <property type="chains" value="SF=1-204"/>
</dbReference>
<dbReference type="PDB" id="8XP3">
    <property type="method" value="EM"/>
    <property type="resolution" value="3.40 A"/>
    <property type="chains" value="SF=1-204"/>
</dbReference>
<dbReference type="PDB" id="8XSX">
    <property type="method" value="EM"/>
    <property type="resolution" value="2.40 A"/>
    <property type="chains" value="SF=1-204"/>
</dbReference>
<dbReference type="PDB" id="8XSY">
    <property type="method" value="EM"/>
    <property type="resolution" value="3.00 A"/>
    <property type="chains" value="SF=1-204"/>
</dbReference>
<dbReference type="PDB" id="8XSZ">
    <property type="method" value="EM"/>
    <property type="resolution" value="3.20 A"/>
    <property type="chains" value="SF=1-204"/>
</dbReference>
<dbReference type="PDB" id="8XXL">
    <property type="method" value="EM"/>
    <property type="resolution" value="2.90 A"/>
    <property type="chains" value="SF=1-204"/>
</dbReference>
<dbReference type="PDB" id="8XXM">
    <property type="method" value="EM"/>
    <property type="resolution" value="3.20 A"/>
    <property type="chains" value="SF=1-204"/>
</dbReference>
<dbReference type="PDB" id="8XXN">
    <property type="method" value="EM"/>
    <property type="resolution" value="3.60 A"/>
    <property type="chains" value="SF=1-204"/>
</dbReference>
<dbReference type="PDB" id="8Y0W">
    <property type="method" value="EM"/>
    <property type="resolution" value="3.40 A"/>
    <property type="chains" value="SF=1-204"/>
</dbReference>
<dbReference type="PDB" id="8Y0X">
    <property type="method" value="EM"/>
    <property type="resolution" value="3.30 A"/>
    <property type="chains" value="SF=1-204"/>
</dbReference>
<dbReference type="PDB" id="8YOO">
    <property type="method" value="EM"/>
    <property type="resolution" value="2.00 A"/>
    <property type="chains" value="SF=1-204"/>
</dbReference>
<dbReference type="PDB" id="8YOP">
    <property type="method" value="EM"/>
    <property type="resolution" value="2.20 A"/>
    <property type="chains" value="SF=1-204"/>
</dbReference>
<dbReference type="PDB" id="8ZDB">
    <property type="method" value="EM"/>
    <property type="resolution" value="3.60 A"/>
    <property type="chains" value="F=1-204"/>
</dbReference>
<dbReference type="PDB" id="8ZDC">
    <property type="method" value="EM"/>
    <property type="resolution" value="3.80 A"/>
    <property type="chains" value="F=1-204"/>
</dbReference>
<dbReference type="PDB" id="8ZDD">
    <property type="method" value="EM"/>
    <property type="resolution" value="3.70 A"/>
    <property type="chains" value="F=1-204"/>
</dbReference>
<dbReference type="PDB" id="9BKD">
    <property type="method" value="EM"/>
    <property type="resolution" value="2.60 A"/>
    <property type="chains" value="V=1-204"/>
</dbReference>
<dbReference type="PDB" id="9BLN">
    <property type="method" value="EM"/>
    <property type="resolution" value="3.90 A"/>
    <property type="chains" value="V=1-204"/>
</dbReference>
<dbReference type="PDB" id="9C3H">
    <property type="method" value="EM"/>
    <property type="resolution" value="2.00 A"/>
    <property type="chains" value="SD=1-204"/>
</dbReference>
<dbReference type="PDB" id="9G8M">
    <property type="method" value="EM"/>
    <property type="resolution" value="3.30 A"/>
    <property type="chains" value="SF=1-204"/>
</dbReference>
<dbReference type="PDB" id="9G8O">
    <property type="method" value="EM"/>
    <property type="resolution" value="3.40 A"/>
    <property type="chains" value="SF=1-204"/>
</dbReference>
<dbReference type="PDBsum" id="4UG0"/>
<dbReference type="PDBsum" id="4V6X"/>
<dbReference type="PDBsum" id="5A2Q"/>
<dbReference type="PDBsum" id="5AJ0"/>
<dbReference type="PDBsum" id="5FLX"/>
<dbReference type="PDBsum" id="5LKS"/>
<dbReference type="PDBsum" id="5OA3"/>
<dbReference type="PDBsum" id="5T2C"/>
<dbReference type="PDBsum" id="5VYC"/>
<dbReference type="PDBsum" id="6FEC"/>
<dbReference type="PDBsum" id="6G18"/>
<dbReference type="PDBsum" id="6G4S"/>
<dbReference type="PDBsum" id="6G4W"/>
<dbReference type="PDBsum" id="6G51"/>
<dbReference type="PDBsum" id="6G53"/>
<dbReference type="PDBsum" id="6G5H"/>
<dbReference type="PDBsum" id="6G5I"/>
<dbReference type="PDBsum" id="6IP5"/>
<dbReference type="PDBsum" id="6IP6"/>
<dbReference type="PDBsum" id="6IP8"/>
<dbReference type="PDBsum" id="6OLE"/>
<dbReference type="PDBsum" id="6OLF"/>
<dbReference type="PDBsum" id="6OLG"/>
<dbReference type="PDBsum" id="6OLI"/>
<dbReference type="PDBsum" id="6OLZ"/>
<dbReference type="PDBsum" id="6OM0"/>
<dbReference type="PDBsum" id="6OM7"/>
<dbReference type="PDBsum" id="6QZP"/>
<dbReference type="PDBsum" id="6XA1"/>
<dbReference type="PDBsum" id="6Y0G"/>
<dbReference type="PDBsum" id="6Y2L"/>
<dbReference type="PDBsum" id="6Y57"/>
<dbReference type="PDBsum" id="6YBS"/>
<dbReference type="PDBsum" id="6Z6L"/>
<dbReference type="PDBsum" id="6Z6M"/>
<dbReference type="PDBsum" id="6Z6N"/>
<dbReference type="PDBsum" id="6ZLW"/>
<dbReference type="PDBsum" id="6ZM7"/>
<dbReference type="PDBsum" id="6ZME"/>
<dbReference type="PDBsum" id="6ZMI"/>
<dbReference type="PDBsum" id="6ZMO"/>
<dbReference type="PDBsum" id="6ZMT"/>
<dbReference type="PDBsum" id="6ZMW"/>
<dbReference type="PDBsum" id="6ZN5"/>
<dbReference type="PDBsum" id="6ZOJ"/>
<dbReference type="PDBsum" id="6ZOL"/>
<dbReference type="PDBsum" id="6ZON"/>
<dbReference type="PDBsum" id="6ZP4"/>
<dbReference type="PDBsum" id="6ZUO"/>
<dbReference type="PDBsum" id="6ZV6"/>
<dbReference type="PDBsum" id="6ZVH"/>
<dbReference type="PDBsum" id="6ZVJ"/>
<dbReference type="PDBsum" id="6ZXD"/>
<dbReference type="PDBsum" id="6ZXE"/>
<dbReference type="PDBsum" id="6ZXF"/>
<dbReference type="PDBsum" id="6ZXG"/>
<dbReference type="PDBsum" id="6ZXH"/>
<dbReference type="PDBsum" id="7A09"/>
<dbReference type="PDBsum" id="7K5I"/>
<dbReference type="PDBsum" id="7MQ8"/>
<dbReference type="PDBsum" id="7MQ9"/>
<dbReference type="PDBsum" id="7MQA"/>
<dbReference type="PDBsum" id="7QP6"/>
<dbReference type="PDBsum" id="7QP7"/>
<dbReference type="PDBsum" id="7R4X"/>
<dbReference type="PDBsum" id="7TQL"/>
<dbReference type="PDBsum" id="7WTT"/>
<dbReference type="PDBsum" id="7WTU"/>
<dbReference type="PDBsum" id="7WTV"/>
<dbReference type="PDBsum" id="7WTW"/>
<dbReference type="PDBsum" id="7WTX"/>
<dbReference type="PDBsum" id="7WTZ"/>
<dbReference type="PDBsum" id="7WU0"/>
<dbReference type="PDBsum" id="7XNX"/>
<dbReference type="PDBsum" id="7XNY"/>
<dbReference type="PDBsum" id="8G5Y"/>
<dbReference type="PDBsum" id="8G5Z"/>
<dbReference type="PDBsum" id="8G60"/>
<dbReference type="PDBsum" id="8G61"/>
<dbReference type="PDBsum" id="8G6J"/>
<dbReference type="PDBsum" id="8GLP"/>
<dbReference type="PDBsum" id="8IFD"/>
<dbReference type="PDBsum" id="8IFE"/>
<dbReference type="PDBsum" id="8JDJ"/>
<dbReference type="PDBsum" id="8JDK"/>
<dbReference type="PDBsum" id="8JDL"/>
<dbReference type="PDBsum" id="8JDM"/>
<dbReference type="PDBsum" id="8K2C"/>
<dbReference type="PDBsum" id="8OZ0"/>
<dbReference type="PDBsum" id="8PJ1"/>
<dbReference type="PDBsum" id="8PJ2"/>
<dbReference type="PDBsum" id="8PJ3"/>
<dbReference type="PDBsum" id="8PJ4"/>
<dbReference type="PDBsum" id="8PJ5"/>
<dbReference type="PDBsum" id="8PJ6"/>
<dbReference type="PDBsum" id="8PPK"/>
<dbReference type="PDBsum" id="8PPL"/>
<dbReference type="PDBsum" id="8QOI"/>
<dbReference type="PDBsum" id="8T4S"/>
<dbReference type="PDBsum" id="8UKB"/>
<dbReference type="PDBsum" id="8XP2"/>
<dbReference type="PDBsum" id="8XP3"/>
<dbReference type="PDBsum" id="8XSX"/>
<dbReference type="PDBsum" id="8XSY"/>
<dbReference type="PDBsum" id="8XSZ"/>
<dbReference type="PDBsum" id="8XXL"/>
<dbReference type="PDBsum" id="8XXM"/>
<dbReference type="PDBsum" id="8XXN"/>
<dbReference type="PDBsum" id="8Y0W"/>
<dbReference type="PDBsum" id="8Y0X"/>
<dbReference type="PDBsum" id="8YOO"/>
<dbReference type="PDBsum" id="8YOP"/>
<dbReference type="PDBsum" id="8ZDB"/>
<dbReference type="PDBsum" id="8ZDC"/>
<dbReference type="PDBsum" id="8ZDD"/>
<dbReference type="PDBsum" id="9BKD"/>
<dbReference type="PDBsum" id="9BLN"/>
<dbReference type="PDBsum" id="9C3H"/>
<dbReference type="PDBsum" id="9G8M"/>
<dbReference type="PDBsum" id="9G8O"/>
<dbReference type="EMDB" id="EMD-10668"/>
<dbReference type="EMDB" id="EMD-10674"/>
<dbReference type="EMDB" id="EMD-10690"/>
<dbReference type="EMDB" id="EMD-10772"/>
<dbReference type="EMDB" id="EMD-11098"/>
<dbReference type="EMDB" id="EMD-11099"/>
<dbReference type="EMDB" id="EMD-11100"/>
<dbReference type="EMDB" id="EMD-11276"/>
<dbReference type="EMDB" id="EMD-11288"/>
<dbReference type="EMDB" id="EMD-11289"/>
<dbReference type="EMDB" id="EMD-11292"/>
<dbReference type="EMDB" id="EMD-11299"/>
<dbReference type="EMDB" id="EMD-11301"/>
<dbReference type="EMDB" id="EMD-11302"/>
<dbReference type="EMDB" id="EMD-11310"/>
<dbReference type="EMDB" id="EMD-11320"/>
<dbReference type="EMDB" id="EMD-11322"/>
<dbReference type="EMDB" id="EMD-11325"/>
<dbReference type="EMDB" id="EMD-11335"/>
<dbReference type="EMDB" id="EMD-11440"/>
<dbReference type="EMDB" id="EMD-11441"/>
<dbReference type="EMDB" id="EMD-11456"/>
<dbReference type="EMDB" id="EMD-11458"/>
<dbReference type="EMDB" id="EMD-11517"/>
<dbReference type="EMDB" id="EMD-11518"/>
<dbReference type="EMDB" id="EMD-11519"/>
<dbReference type="EMDB" id="EMD-11520"/>
<dbReference type="EMDB" id="EMD-11521"/>
<dbReference type="EMDB" id="EMD-11602"/>
<dbReference type="EMDB" id="EMD-14113"/>
<dbReference type="EMDB" id="EMD-14114"/>
<dbReference type="EMDB" id="EMD-14317"/>
<dbReference type="EMDB" id="EMD-17297"/>
<dbReference type="EMDB" id="EMD-17696"/>
<dbReference type="EMDB" id="EMD-17697"/>
<dbReference type="EMDB" id="EMD-17698"/>
<dbReference type="EMDB" id="EMD-17699"/>
<dbReference type="EMDB" id="EMD-17700"/>
<dbReference type="EMDB" id="EMD-17701"/>
<dbReference type="EMDB" id="EMD-17804"/>
<dbReference type="EMDB" id="EMD-17805"/>
<dbReference type="EMDB" id="EMD-18539"/>
<dbReference type="EMDB" id="EMD-22681"/>
<dbReference type="EMDB" id="EMD-23936"/>
<dbReference type="EMDB" id="EMD-23937"/>
<dbReference type="EMDB" id="EMD-23938"/>
<dbReference type="EMDB" id="EMD-26067"/>
<dbReference type="EMDB" id="EMD-29757"/>
<dbReference type="EMDB" id="EMD-29758"/>
<dbReference type="EMDB" id="EMD-29759"/>
<dbReference type="EMDB" id="EMD-29760"/>
<dbReference type="EMDB" id="EMD-29771"/>
<dbReference type="EMDB" id="EMD-32800"/>
<dbReference type="EMDB" id="EMD-32801"/>
<dbReference type="EMDB" id="EMD-32802"/>
<dbReference type="EMDB" id="EMD-32803"/>
<dbReference type="EMDB" id="EMD-32804"/>
<dbReference type="EMDB" id="EMD-32806"/>
<dbReference type="EMDB" id="EMD-32807"/>
<dbReference type="EMDB" id="EMD-33329"/>
<dbReference type="EMDB" id="EMD-33330"/>
<dbReference type="EMDB" id="EMD-35413"/>
<dbReference type="EMDB" id="EMD-35414"/>
<dbReference type="EMDB" id="EMD-36178"/>
<dbReference type="EMDB" id="EMD-36179"/>
<dbReference type="EMDB" id="EMD-36180"/>
<dbReference type="EMDB" id="EMD-36181"/>
<dbReference type="EMDB" id="EMD-36838"/>
<dbReference type="EMDB" id="EMD-3770"/>
<dbReference type="EMDB" id="EMD-38548"/>
<dbReference type="EMDB" id="EMD-38549"/>
<dbReference type="EMDB" id="EMD-38629"/>
<dbReference type="EMDB" id="EMD-38630"/>
<dbReference type="EMDB" id="EMD-38631"/>
<dbReference type="EMDB" id="EMD-38752"/>
<dbReference type="EMDB" id="EMD-38753"/>
<dbReference type="EMDB" id="EMD-38754"/>
<dbReference type="EMDB" id="EMD-3883"/>
<dbReference type="EMDB" id="EMD-39455"/>
<dbReference type="EMDB" id="EMD-39456"/>
<dbReference type="EMDB" id="EMD-39956"/>
<dbReference type="EMDB" id="EMD-39957"/>
<dbReference type="EMDB" id="EMD-39958"/>
<dbReference type="EMDB" id="EMD-40205"/>
<dbReference type="EMDB" id="EMD-4070"/>
<dbReference type="EMDB" id="EMD-41039"/>
<dbReference type="EMDB" id="EMD-42351"/>
<dbReference type="EMDB" id="EMD-4242"/>
<dbReference type="EMDB" id="EMD-4337"/>
<dbReference type="EMDB" id="EMD-4348"/>
<dbReference type="EMDB" id="EMD-4349"/>
<dbReference type="EMDB" id="EMD-4350"/>
<dbReference type="EMDB" id="EMD-4351"/>
<dbReference type="EMDB" id="EMD-4352"/>
<dbReference type="EMDB" id="EMD-4353"/>
<dbReference type="EMDB" id="EMD-44641"/>
<dbReference type="EMDB" id="EMD-44671"/>
<dbReference type="EMDB" id="EMD-45170"/>
<dbReference type="EMDB" id="EMD-51132"/>
<dbReference type="EMDB" id="EMD-51134"/>
<dbReference type="EMDB" id="EMD-9701"/>
<dbReference type="EMDB" id="EMD-9702"/>
<dbReference type="EMDB" id="EMD-9703"/>
<dbReference type="SMR" id="P46782"/>
<dbReference type="BioGRID" id="112107">
    <property type="interactions" value="437"/>
</dbReference>
<dbReference type="ComplexPortal" id="CPX-5223">
    <property type="entry name" value="40S cytosolic small ribosomal subunit"/>
</dbReference>
<dbReference type="CORUM" id="P46782"/>
<dbReference type="FunCoup" id="P46782">
    <property type="interactions" value="1751"/>
</dbReference>
<dbReference type="IntAct" id="P46782">
    <property type="interactions" value="166"/>
</dbReference>
<dbReference type="MINT" id="P46782"/>
<dbReference type="STRING" id="9606.ENSP00000472985"/>
<dbReference type="DrugBank" id="DB11638">
    <property type="generic name" value="Artenimol"/>
</dbReference>
<dbReference type="GlyGen" id="P46782">
    <property type="glycosylation" value="1 site, 1 O-linked glycan (1 site)"/>
</dbReference>
<dbReference type="iPTMnet" id="P46782"/>
<dbReference type="MetOSite" id="P46782"/>
<dbReference type="PhosphoSitePlus" id="P46782"/>
<dbReference type="SwissPalm" id="P46782"/>
<dbReference type="BioMuta" id="RPS5"/>
<dbReference type="jPOST" id="P46782"/>
<dbReference type="MassIVE" id="P46782"/>
<dbReference type="PaxDb" id="9606-ENSP00000472985"/>
<dbReference type="PeptideAtlas" id="P46782"/>
<dbReference type="PRIDE" id="P46782"/>
<dbReference type="ProteomicsDB" id="55764"/>
<dbReference type="Pumba" id="P46782"/>
<dbReference type="TopDownProteomics" id="P46782"/>
<dbReference type="Antibodypedia" id="33338">
    <property type="antibodies" value="257 antibodies from 29 providers"/>
</dbReference>
<dbReference type="DNASU" id="6193"/>
<dbReference type="Ensembl" id="ENST00000196551.8">
    <property type="protein sequence ID" value="ENSP00000196551.3"/>
    <property type="gene ID" value="ENSG00000083845.9"/>
</dbReference>
<dbReference type="Ensembl" id="ENST00000596046.1">
    <property type="protein sequence ID" value="ENSP00000472985.1"/>
    <property type="gene ID" value="ENSG00000083845.9"/>
</dbReference>
<dbReference type="Ensembl" id="ENST00000601521.5">
    <property type="protein sequence ID" value="ENSP00000470114.1"/>
    <property type="gene ID" value="ENSG00000083845.9"/>
</dbReference>
<dbReference type="GeneID" id="6193"/>
<dbReference type="KEGG" id="hsa:6193"/>
<dbReference type="MANE-Select" id="ENST00000196551.8">
    <property type="protein sequence ID" value="ENSP00000196551.3"/>
    <property type="RefSeq nucleotide sequence ID" value="NM_001009.4"/>
    <property type="RefSeq protein sequence ID" value="NP_001000.2"/>
</dbReference>
<dbReference type="UCSC" id="uc002qsn.4">
    <property type="organism name" value="human"/>
</dbReference>
<dbReference type="AGR" id="HGNC:10426"/>
<dbReference type="CTD" id="6193"/>
<dbReference type="DisGeNET" id="6193"/>
<dbReference type="GeneCards" id="RPS5"/>
<dbReference type="HGNC" id="HGNC:10426">
    <property type="gene designation" value="RPS5"/>
</dbReference>
<dbReference type="HPA" id="ENSG00000083845">
    <property type="expression patterns" value="Low tissue specificity"/>
</dbReference>
<dbReference type="MIM" id="603630">
    <property type="type" value="gene"/>
</dbReference>
<dbReference type="neXtProt" id="NX_P46782"/>
<dbReference type="OpenTargets" id="ENSG00000083845"/>
<dbReference type="PharmGKB" id="PA34841"/>
<dbReference type="VEuPathDB" id="HostDB:ENSG00000083845"/>
<dbReference type="eggNOG" id="KOG3291">
    <property type="taxonomic scope" value="Eukaryota"/>
</dbReference>
<dbReference type="GeneTree" id="ENSGT00390000010806"/>
<dbReference type="HOGENOM" id="CLU_063975_0_0_1"/>
<dbReference type="InParanoid" id="P46782"/>
<dbReference type="OMA" id="KMNIVER"/>
<dbReference type="OrthoDB" id="10264639at2759"/>
<dbReference type="PAN-GO" id="P46782">
    <property type="GO annotations" value="7 GO annotations based on evolutionary models"/>
</dbReference>
<dbReference type="PhylomeDB" id="P46782"/>
<dbReference type="TreeFam" id="TF300872"/>
<dbReference type="PathwayCommons" id="P46782"/>
<dbReference type="Reactome" id="R-HSA-156827">
    <property type="pathway name" value="L13a-mediated translational silencing of Ceruloplasmin expression"/>
</dbReference>
<dbReference type="Reactome" id="R-HSA-156902">
    <property type="pathway name" value="Peptide chain elongation"/>
</dbReference>
<dbReference type="Reactome" id="R-HSA-1799339">
    <property type="pathway name" value="SRP-dependent cotranslational protein targeting to membrane"/>
</dbReference>
<dbReference type="Reactome" id="R-HSA-192823">
    <property type="pathway name" value="Viral mRNA Translation"/>
</dbReference>
<dbReference type="Reactome" id="R-HSA-2408557">
    <property type="pathway name" value="Selenocysteine synthesis"/>
</dbReference>
<dbReference type="Reactome" id="R-HSA-6791226">
    <property type="pathway name" value="Major pathway of rRNA processing in the nucleolus and cytosol"/>
</dbReference>
<dbReference type="Reactome" id="R-HSA-72649">
    <property type="pathway name" value="Translation initiation complex formation"/>
</dbReference>
<dbReference type="Reactome" id="R-HSA-72689">
    <property type="pathway name" value="Formation of a pool of free 40S subunits"/>
</dbReference>
<dbReference type="Reactome" id="R-HSA-72695">
    <property type="pathway name" value="Formation of the ternary complex, and subsequently, the 43S complex"/>
</dbReference>
<dbReference type="Reactome" id="R-HSA-72702">
    <property type="pathway name" value="Ribosomal scanning and start codon recognition"/>
</dbReference>
<dbReference type="Reactome" id="R-HSA-72706">
    <property type="pathway name" value="GTP hydrolysis and joining of the 60S ribosomal subunit"/>
</dbReference>
<dbReference type="Reactome" id="R-HSA-72764">
    <property type="pathway name" value="Eukaryotic Translation Termination"/>
</dbReference>
<dbReference type="Reactome" id="R-HSA-9010553">
    <property type="pathway name" value="Regulation of expression of SLITs and ROBOs"/>
</dbReference>
<dbReference type="Reactome" id="R-HSA-9633012">
    <property type="pathway name" value="Response of EIF2AK4 (GCN2) to amino acid deficiency"/>
</dbReference>
<dbReference type="Reactome" id="R-HSA-9735869">
    <property type="pathway name" value="SARS-CoV-1 modulates host translation machinery"/>
</dbReference>
<dbReference type="Reactome" id="R-HSA-9754678">
    <property type="pathway name" value="SARS-CoV-2 modulates host translation machinery"/>
</dbReference>
<dbReference type="Reactome" id="R-HSA-975956">
    <property type="pathway name" value="Nonsense Mediated Decay (NMD) independent of the Exon Junction Complex (EJC)"/>
</dbReference>
<dbReference type="Reactome" id="R-HSA-975957">
    <property type="pathway name" value="Nonsense Mediated Decay (NMD) enhanced by the Exon Junction Complex (EJC)"/>
</dbReference>
<dbReference type="SignaLink" id="P46782"/>
<dbReference type="SIGNOR" id="P46782"/>
<dbReference type="BioGRID-ORCS" id="6193">
    <property type="hits" value="862 hits in 1149 CRISPR screens"/>
</dbReference>
<dbReference type="CD-CODE" id="91857CE7">
    <property type="entry name" value="Nucleolus"/>
</dbReference>
<dbReference type="CD-CODE" id="FB4E32DD">
    <property type="entry name" value="Presynaptic clusters and postsynaptic densities"/>
</dbReference>
<dbReference type="ChiTaRS" id="RPS5">
    <property type="organism name" value="human"/>
</dbReference>
<dbReference type="GeneWiki" id="RPS5"/>
<dbReference type="GenomeRNAi" id="6193"/>
<dbReference type="Pharos" id="P46782">
    <property type="development level" value="Tbio"/>
</dbReference>
<dbReference type="PRO" id="PR:P46782"/>
<dbReference type="Proteomes" id="UP000005640">
    <property type="component" value="Chromosome 19"/>
</dbReference>
<dbReference type="RNAct" id="P46782">
    <property type="molecule type" value="protein"/>
</dbReference>
<dbReference type="Bgee" id="ENSG00000083845">
    <property type="expression patterns" value="Expressed in primordial germ cell in gonad and 214 other cell types or tissues"/>
</dbReference>
<dbReference type="ExpressionAtlas" id="P46782">
    <property type="expression patterns" value="baseline and differential"/>
</dbReference>
<dbReference type="GO" id="GO:0005737">
    <property type="term" value="C:cytoplasm"/>
    <property type="evidence" value="ECO:0000303"/>
    <property type="project" value="ComplexPortal"/>
</dbReference>
<dbReference type="GO" id="GO:0005829">
    <property type="term" value="C:cytosol"/>
    <property type="evidence" value="ECO:0000304"/>
    <property type="project" value="Reactome"/>
</dbReference>
<dbReference type="GO" id="GO:0022626">
    <property type="term" value="C:cytosolic ribosome"/>
    <property type="evidence" value="ECO:0000314"/>
    <property type="project" value="FlyBase"/>
</dbReference>
<dbReference type="GO" id="GO:0022627">
    <property type="term" value="C:cytosolic small ribosomal subunit"/>
    <property type="evidence" value="ECO:0000314"/>
    <property type="project" value="UniProtKB"/>
</dbReference>
<dbReference type="GO" id="GO:0070062">
    <property type="term" value="C:extracellular exosome"/>
    <property type="evidence" value="ECO:0007005"/>
    <property type="project" value="UniProtKB"/>
</dbReference>
<dbReference type="GO" id="GO:0005925">
    <property type="term" value="C:focal adhesion"/>
    <property type="evidence" value="ECO:0007005"/>
    <property type="project" value="UniProtKB"/>
</dbReference>
<dbReference type="GO" id="GO:0016020">
    <property type="term" value="C:membrane"/>
    <property type="evidence" value="ECO:0007005"/>
    <property type="project" value="UniProtKB"/>
</dbReference>
<dbReference type="GO" id="GO:0005730">
    <property type="term" value="C:nucleolus"/>
    <property type="evidence" value="ECO:0007669"/>
    <property type="project" value="UniProtKB-SubCell"/>
</dbReference>
<dbReference type="GO" id="GO:0005654">
    <property type="term" value="C:nucleoplasm"/>
    <property type="evidence" value="ECO:0000304"/>
    <property type="project" value="Reactome"/>
</dbReference>
<dbReference type="GO" id="GO:1990904">
    <property type="term" value="C:ribonucleoprotein complex"/>
    <property type="evidence" value="ECO:0000314"/>
    <property type="project" value="MGI"/>
</dbReference>
<dbReference type="GO" id="GO:0005840">
    <property type="term" value="C:ribosome"/>
    <property type="evidence" value="ECO:0000318"/>
    <property type="project" value="GO_Central"/>
</dbReference>
<dbReference type="GO" id="GO:0032040">
    <property type="term" value="C:small-subunit processome"/>
    <property type="evidence" value="ECO:0000314"/>
    <property type="project" value="UniProtKB"/>
</dbReference>
<dbReference type="GO" id="GO:0045202">
    <property type="term" value="C:synapse"/>
    <property type="evidence" value="ECO:0007669"/>
    <property type="project" value="Ensembl"/>
</dbReference>
<dbReference type="GO" id="GO:0003729">
    <property type="term" value="F:mRNA binding"/>
    <property type="evidence" value="ECO:0000314"/>
    <property type="project" value="UniProtKB"/>
</dbReference>
<dbReference type="GO" id="GO:0003723">
    <property type="term" value="F:RNA binding"/>
    <property type="evidence" value="ECO:0007005"/>
    <property type="project" value="UniProtKB"/>
</dbReference>
<dbReference type="GO" id="GO:0019843">
    <property type="term" value="F:rRNA binding"/>
    <property type="evidence" value="ECO:0000318"/>
    <property type="project" value="GO_Central"/>
</dbReference>
<dbReference type="GO" id="GO:0003735">
    <property type="term" value="F:structural constituent of ribosome"/>
    <property type="evidence" value="ECO:0000314"/>
    <property type="project" value="FlyBase"/>
</dbReference>
<dbReference type="GO" id="GO:0002181">
    <property type="term" value="P:cytoplasmic translation"/>
    <property type="evidence" value="ECO:0000303"/>
    <property type="project" value="ComplexPortal"/>
</dbReference>
<dbReference type="GO" id="GO:0006450">
    <property type="term" value="P:regulation of translational fidelity"/>
    <property type="evidence" value="ECO:0000316"/>
    <property type="project" value="UniProtKB"/>
</dbReference>
<dbReference type="GO" id="GO:0000028">
    <property type="term" value="P:ribosomal small subunit assembly"/>
    <property type="evidence" value="ECO:0000318"/>
    <property type="project" value="GO_Central"/>
</dbReference>
<dbReference type="GO" id="GO:0042274">
    <property type="term" value="P:ribosomal small subunit biogenesis"/>
    <property type="evidence" value="ECO:0000314"/>
    <property type="project" value="UniProtKB"/>
</dbReference>
<dbReference type="GO" id="GO:0006412">
    <property type="term" value="P:translation"/>
    <property type="evidence" value="ECO:0000316"/>
    <property type="project" value="UniProtKB"/>
</dbReference>
<dbReference type="GO" id="GO:0006413">
    <property type="term" value="P:translational initiation"/>
    <property type="evidence" value="ECO:0000305"/>
    <property type="project" value="UniProtKB"/>
</dbReference>
<dbReference type="CDD" id="cd14867">
    <property type="entry name" value="uS7_Eukaryote"/>
    <property type="match status" value="1"/>
</dbReference>
<dbReference type="FunFam" id="1.10.455.10:FF:000003">
    <property type="entry name" value="40S ribosomal protein S5"/>
    <property type="match status" value="1"/>
</dbReference>
<dbReference type="Gene3D" id="1.10.455.10">
    <property type="entry name" value="Ribosomal protein S7 domain"/>
    <property type="match status" value="1"/>
</dbReference>
<dbReference type="InterPro" id="IPR000235">
    <property type="entry name" value="Ribosomal_uS7"/>
</dbReference>
<dbReference type="InterPro" id="IPR020606">
    <property type="entry name" value="Ribosomal_uS7_CS"/>
</dbReference>
<dbReference type="InterPro" id="IPR023798">
    <property type="entry name" value="Ribosomal_uS7_dom"/>
</dbReference>
<dbReference type="InterPro" id="IPR036823">
    <property type="entry name" value="Ribosomal_uS7_dom_sf"/>
</dbReference>
<dbReference type="InterPro" id="IPR005716">
    <property type="entry name" value="Ribosomal_uS7_euk/arc"/>
</dbReference>
<dbReference type="NCBIfam" id="NF003106">
    <property type="entry name" value="PRK04027.1"/>
    <property type="match status" value="1"/>
</dbReference>
<dbReference type="NCBIfam" id="TIGR01028">
    <property type="entry name" value="uS7_euk_arch"/>
    <property type="match status" value="1"/>
</dbReference>
<dbReference type="PANTHER" id="PTHR11205">
    <property type="entry name" value="RIBOSOMAL PROTEIN S7"/>
    <property type="match status" value="1"/>
</dbReference>
<dbReference type="Pfam" id="PF00177">
    <property type="entry name" value="Ribosomal_S7"/>
    <property type="match status" value="1"/>
</dbReference>
<dbReference type="PIRSF" id="PIRSF002122">
    <property type="entry name" value="RPS7p_RPS7a_RPS5e_RPS7o"/>
    <property type="match status" value="1"/>
</dbReference>
<dbReference type="SUPFAM" id="SSF47973">
    <property type="entry name" value="Ribosomal protein S7"/>
    <property type="match status" value="1"/>
</dbReference>
<dbReference type="PROSITE" id="PS00052">
    <property type="entry name" value="RIBOSOMAL_S7"/>
    <property type="match status" value="1"/>
</dbReference>
<protein>
    <recommendedName>
        <fullName evidence="5">Small ribosomal subunit protein uS7</fullName>
    </recommendedName>
    <alternativeName>
        <fullName>40S ribosomal protein S5</fullName>
    </alternativeName>
    <component>
        <recommendedName>
            <fullName>Small ribosomal subunit protein uS7, N-terminally processed</fullName>
        </recommendedName>
        <alternativeName>
            <fullName>40S ribosomal protein S5, N-terminally processed</fullName>
        </alternativeName>
    </component>
</protein>
<organism>
    <name type="scientific">Homo sapiens</name>
    <name type="common">Human</name>
    <dbReference type="NCBI Taxonomy" id="9606"/>
    <lineage>
        <taxon>Eukaryota</taxon>
        <taxon>Metazoa</taxon>
        <taxon>Chordata</taxon>
        <taxon>Craniata</taxon>
        <taxon>Vertebrata</taxon>
        <taxon>Euteleostomi</taxon>
        <taxon>Mammalia</taxon>
        <taxon>Eutheria</taxon>
        <taxon>Euarchontoglires</taxon>
        <taxon>Primates</taxon>
        <taxon>Haplorrhini</taxon>
        <taxon>Catarrhini</taxon>
        <taxon>Hominidae</taxon>
        <taxon>Homo</taxon>
    </lineage>
</organism>
<keyword id="KW-0002">3D-structure</keyword>
<keyword id="KW-0007">Acetylation</keyword>
<keyword id="KW-0963">Cytoplasm</keyword>
<keyword id="KW-0903">Direct protein sequencing</keyword>
<keyword id="KW-1017">Isopeptide bond</keyword>
<keyword id="KW-0539">Nucleus</keyword>
<keyword id="KW-0597">Phosphoprotein</keyword>
<keyword id="KW-1267">Proteomics identification</keyword>
<keyword id="KW-1185">Reference proteome</keyword>
<keyword id="KW-0687">Ribonucleoprotein</keyword>
<keyword id="KW-0689">Ribosomal protein</keyword>
<keyword id="KW-0832">Ubl conjugation</keyword>
<reference key="1">
    <citation type="journal article" date="1995" name="Biochim. Biophys. Acta">
        <title>Cloning, sequencing and expression of the L5, L21, L27a, L28, S5, S9, S10 and S29 human ribosomal protein mRNAs.</title>
        <authorList>
            <person name="Frigerio J.-M."/>
            <person name="Dagorn J.-C."/>
            <person name="Iovanna J.L."/>
        </authorList>
    </citation>
    <scope>NUCLEOTIDE SEQUENCE [MRNA]</scope>
    <source>
        <tissue>Colon</tissue>
    </source>
</reference>
<reference key="2">
    <citation type="journal article" date="2002" name="Genome Res.">
        <title>The human ribosomal protein genes: sequencing and comparative analysis of 73 genes.</title>
        <authorList>
            <person name="Yoshihama M."/>
            <person name="Uechi T."/>
            <person name="Asakawa S."/>
            <person name="Kawasaki K."/>
            <person name="Kato S."/>
            <person name="Higa S."/>
            <person name="Maeda N."/>
            <person name="Minoshima S."/>
            <person name="Tanaka T."/>
            <person name="Shimizu N."/>
            <person name="Kenmochi N."/>
        </authorList>
    </citation>
    <scope>NUCLEOTIDE SEQUENCE [GENOMIC DNA]</scope>
</reference>
<reference key="3">
    <citation type="journal article" date="2004" name="Nat. Genet.">
        <title>Complete sequencing and characterization of 21,243 full-length human cDNAs.</title>
        <authorList>
            <person name="Ota T."/>
            <person name="Suzuki Y."/>
            <person name="Nishikawa T."/>
            <person name="Otsuki T."/>
            <person name="Sugiyama T."/>
            <person name="Irie R."/>
            <person name="Wakamatsu A."/>
            <person name="Hayashi K."/>
            <person name="Sato H."/>
            <person name="Nagai K."/>
            <person name="Kimura K."/>
            <person name="Makita H."/>
            <person name="Sekine M."/>
            <person name="Obayashi M."/>
            <person name="Nishi T."/>
            <person name="Shibahara T."/>
            <person name="Tanaka T."/>
            <person name="Ishii S."/>
            <person name="Yamamoto J."/>
            <person name="Saito K."/>
            <person name="Kawai Y."/>
            <person name="Isono Y."/>
            <person name="Nakamura Y."/>
            <person name="Nagahari K."/>
            <person name="Murakami K."/>
            <person name="Yasuda T."/>
            <person name="Iwayanagi T."/>
            <person name="Wagatsuma M."/>
            <person name="Shiratori A."/>
            <person name="Sudo H."/>
            <person name="Hosoiri T."/>
            <person name="Kaku Y."/>
            <person name="Kodaira H."/>
            <person name="Kondo H."/>
            <person name="Sugawara M."/>
            <person name="Takahashi M."/>
            <person name="Kanda K."/>
            <person name="Yokoi T."/>
            <person name="Furuya T."/>
            <person name="Kikkawa E."/>
            <person name="Omura Y."/>
            <person name="Abe K."/>
            <person name="Kamihara K."/>
            <person name="Katsuta N."/>
            <person name="Sato K."/>
            <person name="Tanikawa M."/>
            <person name="Yamazaki M."/>
            <person name="Ninomiya K."/>
            <person name="Ishibashi T."/>
            <person name="Yamashita H."/>
            <person name="Murakawa K."/>
            <person name="Fujimori K."/>
            <person name="Tanai H."/>
            <person name="Kimata M."/>
            <person name="Watanabe M."/>
            <person name="Hiraoka S."/>
            <person name="Chiba Y."/>
            <person name="Ishida S."/>
            <person name="Ono Y."/>
            <person name="Takiguchi S."/>
            <person name="Watanabe S."/>
            <person name="Yosida M."/>
            <person name="Hotuta T."/>
            <person name="Kusano J."/>
            <person name="Kanehori K."/>
            <person name="Takahashi-Fujii A."/>
            <person name="Hara H."/>
            <person name="Tanase T.-O."/>
            <person name="Nomura Y."/>
            <person name="Togiya S."/>
            <person name="Komai F."/>
            <person name="Hara R."/>
            <person name="Takeuchi K."/>
            <person name="Arita M."/>
            <person name="Imose N."/>
            <person name="Musashino K."/>
            <person name="Yuuki H."/>
            <person name="Oshima A."/>
            <person name="Sasaki N."/>
            <person name="Aotsuka S."/>
            <person name="Yoshikawa Y."/>
            <person name="Matsunawa H."/>
            <person name="Ichihara T."/>
            <person name="Shiohata N."/>
            <person name="Sano S."/>
            <person name="Moriya S."/>
            <person name="Momiyama H."/>
            <person name="Satoh N."/>
            <person name="Takami S."/>
            <person name="Terashima Y."/>
            <person name="Suzuki O."/>
            <person name="Nakagawa S."/>
            <person name="Senoh A."/>
            <person name="Mizoguchi H."/>
            <person name="Goto Y."/>
            <person name="Shimizu F."/>
            <person name="Wakebe H."/>
            <person name="Hishigaki H."/>
            <person name="Watanabe T."/>
            <person name="Sugiyama A."/>
            <person name="Takemoto M."/>
            <person name="Kawakami B."/>
            <person name="Yamazaki M."/>
            <person name="Watanabe K."/>
            <person name="Kumagai A."/>
            <person name="Itakura S."/>
            <person name="Fukuzumi Y."/>
            <person name="Fujimori Y."/>
            <person name="Komiyama M."/>
            <person name="Tashiro H."/>
            <person name="Tanigami A."/>
            <person name="Fujiwara T."/>
            <person name="Ono T."/>
            <person name="Yamada K."/>
            <person name="Fujii Y."/>
            <person name="Ozaki K."/>
            <person name="Hirao M."/>
            <person name="Ohmori Y."/>
            <person name="Kawabata A."/>
            <person name="Hikiji T."/>
            <person name="Kobatake N."/>
            <person name="Inagaki H."/>
            <person name="Ikema Y."/>
            <person name="Okamoto S."/>
            <person name="Okitani R."/>
            <person name="Kawakami T."/>
            <person name="Noguchi S."/>
            <person name="Itoh T."/>
            <person name="Shigeta K."/>
            <person name="Senba T."/>
            <person name="Matsumura K."/>
            <person name="Nakajima Y."/>
            <person name="Mizuno T."/>
            <person name="Morinaga M."/>
            <person name="Sasaki M."/>
            <person name="Togashi T."/>
            <person name="Oyama M."/>
            <person name="Hata H."/>
            <person name="Watanabe M."/>
            <person name="Komatsu T."/>
            <person name="Mizushima-Sugano J."/>
            <person name="Satoh T."/>
            <person name="Shirai Y."/>
            <person name="Takahashi Y."/>
            <person name="Nakagawa K."/>
            <person name="Okumura K."/>
            <person name="Nagase T."/>
            <person name="Nomura N."/>
            <person name="Kikuchi H."/>
            <person name="Masuho Y."/>
            <person name="Yamashita R."/>
            <person name="Nakai K."/>
            <person name="Yada T."/>
            <person name="Nakamura Y."/>
            <person name="Ohara O."/>
            <person name="Isogai T."/>
            <person name="Sugano S."/>
        </authorList>
    </citation>
    <scope>NUCLEOTIDE SEQUENCE [LARGE SCALE MRNA]</scope>
    <source>
        <tissue>Tongue</tissue>
    </source>
</reference>
<reference key="4">
    <citation type="submission" date="2005-07" db="EMBL/GenBank/DDBJ databases">
        <authorList>
            <person name="Mural R.J."/>
            <person name="Istrail S."/>
            <person name="Sutton G.G."/>
            <person name="Florea L."/>
            <person name="Halpern A.L."/>
            <person name="Mobarry C.M."/>
            <person name="Lippert R."/>
            <person name="Walenz B."/>
            <person name="Shatkay H."/>
            <person name="Dew I."/>
            <person name="Miller J.R."/>
            <person name="Flanigan M.J."/>
            <person name="Edwards N.J."/>
            <person name="Bolanos R."/>
            <person name="Fasulo D."/>
            <person name="Halldorsson B.V."/>
            <person name="Hannenhalli S."/>
            <person name="Turner R."/>
            <person name="Yooseph S."/>
            <person name="Lu F."/>
            <person name="Nusskern D.R."/>
            <person name="Shue B.C."/>
            <person name="Zheng X.H."/>
            <person name="Zhong F."/>
            <person name="Delcher A.L."/>
            <person name="Huson D.H."/>
            <person name="Kravitz S.A."/>
            <person name="Mouchard L."/>
            <person name="Reinert K."/>
            <person name="Remington K.A."/>
            <person name="Clark A.G."/>
            <person name="Waterman M.S."/>
            <person name="Eichler E.E."/>
            <person name="Adams M.D."/>
            <person name="Hunkapiller M.W."/>
            <person name="Myers E.W."/>
            <person name="Venter J.C."/>
        </authorList>
    </citation>
    <scope>NUCLEOTIDE SEQUENCE [LARGE SCALE GENOMIC DNA]</scope>
</reference>
<reference key="5">
    <citation type="journal article" date="2004" name="Genome Res.">
        <title>The status, quality, and expansion of the NIH full-length cDNA project: the Mammalian Gene Collection (MGC).</title>
        <authorList>
            <consortium name="The MGC Project Team"/>
        </authorList>
    </citation>
    <scope>NUCLEOTIDE SEQUENCE [LARGE SCALE MRNA]</scope>
    <source>
        <tissue>Bone</tissue>
        <tissue>Ovary</tissue>
    </source>
</reference>
<reference key="6">
    <citation type="submission" date="2005-06" db="UniProtKB">
        <authorList>
            <person name="Bienvenut W.V."/>
        </authorList>
    </citation>
    <scope>PROTEIN SEQUENCE OF 2-18; 23-42; 48-55; 137-145 AND 168-182</scope>
    <scope>CLEAVAGE OF INITIATOR METHIONINE</scope>
    <scope>ACETYLATION AT THR-2</scope>
    <scope>IDENTIFICATION BY MASS SPECTROMETRY</scope>
    <source>
        <tissue>B-cell lymphoma</tissue>
    </source>
</reference>
<reference key="7">
    <citation type="submission" date="2009-03" db="UniProtKB">
        <authorList>
            <person name="Bienvenut W.V."/>
            <person name="Waridel P."/>
            <person name="Quadroni M."/>
        </authorList>
    </citation>
    <scope>PROTEIN SEQUENCE OF 1-18; 23-42; 137-159 AND 168-182</scope>
    <scope>CLEAVAGE OF INITIATOR METHIONINE</scope>
    <scope>ACETYLATION AT MET-1 AND THR-2</scope>
    <scope>IDENTIFICATION BY MASS SPECTROMETRY</scope>
    <source>
        <tissue>Cervix carcinoma</tissue>
    </source>
</reference>
<reference key="8">
    <citation type="journal article" date="1998" name="Genome Res.">
        <title>A map of 75 human ribosomal protein genes.</title>
        <authorList>
            <person name="Kenmochi N."/>
            <person name="Kawaguchi T."/>
            <person name="Rozen S."/>
            <person name="Davis E."/>
            <person name="Goodman N."/>
            <person name="Hudson T.J."/>
            <person name="Tanaka T."/>
            <person name="Page D.C."/>
        </authorList>
    </citation>
    <scope>NUCLEOTIDE SEQUENCE [GENOMIC DNA] OF 150-204</scope>
</reference>
<reference key="9">
    <citation type="journal article" date="1996" name="Eur. J. Biochem.">
        <title>Characterization of the human small-ribosomal-subunit proteins by N-terminal and internal sequencing, and mass spectrometry.</title>
        <authorList>
            <person name="Vladimirov S.N."/>
            <person name="Ivanov A.V."/>
            <person name="Karpova G.G."/>
            <person name="Musolyamov A.K."/>
            <person name="Egorov T.A."/>
            <person name="Thiede B."/>
            <person name="Wittmann-Liebold B."/>
            <person name="Otto A."/>
        </authorList>
    </citation>
    <scope>PROTEIN SEQUENCE OF 192-197</scope>
    <source>
        <tissue>Placenta</tissue>
    </source>
</reference>
<reference key="10">
    <citation type="journal article" date="2003" name="Nature">
        <title>Proteomic characterization of the human centrosome by protein correlation profiling.</title>
        <authorList>
            <person name="Andersen J.S."/>
            <person name="Wilkinson C.J."/>
            <person name="Mayor T."/>
            <person name="Mortensen P."/>
            <person name="Nigg E.A."/>
            <person name="Mann M."/>
        </authorList>
    </citation>
    <scope>IDENTIFICATION BY MASS SPECTROMETRY</scope>
    <source>
        <tissue>Lymphoblast</tissue>
    </source>
</reference>
<reference key="11">
    <citation type="journal article" date="2009" name="Anal. Chem.">
        <title>Lys-N and trypsin cover complementary parts of the phosphoproteome in a refined SCX-based approach.</title>
        <authorList>
            <person name="Gauci S."/>
            <person name="Helbig A.O."/>
            <person name="Slijper M."/>
            <person name="Krijgsveld J."/>
            <person name="Heck A.J."/>
            <person name="Mohammed S."/>
        </authorList>
    </citation>
    <scope>ACETYLATION [LARGE SCALE ANALYSIS] AT MET-1 AND THR-2</scope>
    <scope>CLEAVAGE OF INITIATOR METHIONINE [LARGE SCALE ANALYSIS]</scope>
    <scope>IDENTIFICATION BY MASS SPECTROMETRY [LARGE SCALE ANALYSIS]</scope>
</reference>
<reference key="12">
    <citation type="journal article" date="2009" name="Science">
        <title>Lysine acetylation targets protein complexes and co-regulates major cellular functions.</title>
        <authorList>
            <person name="Choudhary C."/>
            <person name="Kumar C."/>
            <person name="Gnad F."/>
            <person name="Nielsen M.L."/>
            <person name="Rehman M."/>
            <person name="Walther T.C."/>
            <person name="Olsen J.V."/>
            <person name="Mann M."/>
        </authorList>
    </citation>
    <scope>ACETYLATION [LARGE SCALE ANALYSIS] AT LYS-47</scope>
    <scope>IDENTIFICATION BY MASS SPECTROMETRY [LARGE SCALE ANALYSIS]</scope>
</reference>
<reference key="13">
    <citation type="journal article" date="2011" name="BMC Syst. Biol.">
        <title>Initial characterization of the human central proteome.</title>
        <authorList>
            <person name="Burkard T.R."/>
            <person name="Planyavsky M."/>
            <person name="Kaupe I."/>
            <person name="Breitwieser F.P."/>
            <person name="Buerckstuemmer T."/>
            <person name="Bennett K.L."/>
            <person name="Superti-Furga G."/>
            <person name="Colinge J."/>
        </authorList>
    </citation>
    <scope>IDENTIFICATION BY MASS SPECTROMETRY [LARGE SCALE ANALYSIS]</scope>
</reference>
<reference key="14">
    <citation type="journal article" date="2012" name="Mol. Cell. Proteomics">
        <title>Comparative large-scale characterisation of plant vs. mammal proteins reveals similar and idiosyncratic N-alpha acetylation features.</title>
        <authorList>
            <person name="Bienvenut W.V."/>
            <person name="Sumpton D."/>
            <person name="Martinez A."/>
            <person name="Lilla S."/>
            <person name="Espagne C."/>
            <person name="Meinnel T."/>
            <person name="Giglione C."/>
        </authorList>
    </citation>
    <scope>ACETYLATION [LARGE SCALE ANALYSIS] AT MET-1 AND THR-2</scope>
    <scope>CLEAVAGE OF INITIATOR METHIONINE [LARGE SCALE ANALYSIS]</scope>
    <scope>IDENTIFICATION BY MASS SPECTROMETRY [LARGE SCALE ANALYSIS]</scope>
</reference>
<reference key="15">
    <citation type="journal article" date="2013" name="J. Proteome Res.">
        <title>Toward a comprehensive characterization of a human cancer cell phosphoproteome.</title>
        <authorList>
            <person name="Zhou H."/>
            <person name="Di Palma S."/>
            <person name="Preisinger C."/>
            <person name="Peng M."/>
            <person name="Polat A.N."/>
            <person name="Heck A.J."/>
            <person name="Mohammed S."/>
        </authorList>
    </citation>
    <scope>PHOSPHORYLATION [LARGE SCALE ANALYSIS] AT THR-14 AND SER-142</scope>
    <scope>IDENTIFICATION BY MASS SPECTROMETRY [LARGE SCALE ANALYSIS]</scope>
    <source>
        <tissue>Cervix carcinoma</tissue>
        <tissue>Erythroleukemia</tissue>
    </source>
</reference>
<reference key="16">
    <citation type="journal article" date="2014" name="Curr. Opin. Struct. Biol.">
        <title>A new system for naming ribosomal proteins.</title>
        <authorList>
            <person name="Ban N."/>
            <person name="Beckmann R."/>
            <person name="Cate J.H.D."/>
            <person name="Dinman J.D."/>
            <person name="Dragon F."/>
            <person name="Ellis S.R."/>
            <person name="Lafontaine D.L.J."/>
            <person name="Lindahl L."/>
            <person name="Liljas A."/>
            <person name="Lipton J.M."/>
            <person name="McAlear M.A."/>
            <person name="Moore P.B."/>
            <person name="Noller H.F."/>
            <person name="Ortega J."/>
            <person name="Panse V.G."/>
            <person name="Ramakrishnan V."/>
            <person name="Spahn C.M.T."/>
            <person name="Steitz T.A."/>
            <person name="Tchorzewski M."/>
            <person name="Tollervey D."/>
            <person name="Warren A.J."/>
            <person name="Williamson J.R."/>
            <person name="Wilson D."/>
            <person name="Yonath A."/>
            <person name="Yusupov M."/>
        </authorList>
    </citation>
    <scope>NOMENCLATURE</scope>
</reference>
<reference key="17">
    <citation type="journal article" date="2014" name="J. Proteomics">
        <title>An enzyme assisted RP-RPLC approach for in-depth analysis of human liver phosphoproteome.</title>
        <authorList>
            <person name="Bian Y."/>
            <person name="Song C."/>
            <person name="Cheng K."/>
            <person name="Dong M."/>
            <person name="Wang F."/>
            <person name="Huang J."/>
            <person name="Sun D."/>
            <person name="Wang L."/>
            <person name="Ye M."/>
            <person name="Zou H."/>
        </authorList>
    </citation>
    <scope>PHOSPHORYLATION [LARGE SCALE ANALYSIS] AT THR-14</scope>
    <scope>IDENTIFICATION BY MASS SPECTROMETRY [LARGE SCALE ANALYSIS]</scope>
    <source>
        <tissue>Liver</tissue>
    </source>
</reference>
<reference key="18">
    <citation type="journal article" date="2015" name="Proteomics">
        <title>N-terminome analysis of the human mitochondrial proteome.</title>
        <authorList>
            <person name="Vaca Jacome A.S."/>
            <person name="Rabilloud T."/>
            <person name="Schaeffer-Reiss C."/>
            <person name="Rompais M."/>
            <person name="Ayoub D."/>
            <person name="Lane L."/>
            <person name="Bairoch A."/>
            <person name="Van Dorsselaer A."/>
            <person name="Carapito C."/>
        </authorList>
    </citation>
    <scope>ACETYLATION [LARGE SCALE ANALYSIS] AT MET-1 AND THR-2</scope>
    <scope>CLEAVAGE OF INITIATOR METHIONINE [LARGE SCALE ANALYSIS]</scope>
    <scope>IDENTIFICATION BY MASS SPECTROMETRY [LARGE SCALE ANALYSIS]</scope>
</reference>
<reference key="19">
    <citation type="journal article" date="2017" name="Nat. Struct. Mol. Biol.">
        <title>Site-specific mapping of the human SUMO proteome reveals co-modification with phosphorylation.</title>
        <authorList>
            <person name="Hendriks I.A."/>
            <person name="Lyon D."/>
            <person name="Young C."/>
            <person name="Jensen L.J."/>
            <person name="Vertegaal A.C."/>
            <person name="Nielsen M.L."/>
        </authorList>
    </citation>
    <scope>SUMOYLATION [LARGE SCALE ANALYSIS] AT LYS-47</scope>
    <scope>IDENTIFICATION BY MASS SPECTROMETRY [LARGE SCALE ANALYSIS]</scope>
</reference>
<reference key="20">
    <citation type="journal article" date="2013" name="Nature">
        <title>Structures of the human and Drosophila 80S ribosome.</title>
        <authorList>
            <person name="Anger A.M."/>
            <person name="Armache J.P."/>
            <person name="Berninghausen O."/>
            <person name="Habeck M."/>
            <person name="Subklewe M."/>
            <person name="Wilson D.N."/>
            <person name="Beckmann R."/>
        </authorList>
    </citation>
    <scope>STRUCTURE BY ELECTRON MICROSCOPY (5.0 ANGSTROMS) OF RIBOSOME</scope>
    <scope>FUNCTION</scope>
    <scope>SUBUNIT</scope>
    <scope>SUBCELLULAR LOCATION</scope>
</reference>
<reference evidence="8 9 10" key="21">
    <citation type="journal article" date="2021" name="Science">
        <title>Nucleolar maturation of the human small subunit processome.</title>
        <authorList>
            <person name="Singh S."/>
            <person name="Vanden Broeck A."/>
            <person name="Miller L."/>
            <person name="Chaker-Margot M."/>
            <person name="Klinge S."/>
        </authorList>
    </citation>
    <scope>STRUCTURE BY ELECTRON MICROSCOPY (2.70 ANGSTROMS)</scope>
    <scope>FUNCTION</scope>
    <scope>SUBUNIT</scope>
    <scope>SUBCELLULAR LOCATION</scope>
</reference>
<proteinExistence type="evidence at protein level"/>
<feature type="chain" id="PRO_0000370369" description="Small ribosomal subunit protein uS7">
    <location>
        <begin position="1"/>
        <end position="204"/>
    </location>
</feature>
<feature type="initiator methionine" description="Removed; alternate" evidence="3 4 11 13 16">
    <location>
        <position position="1"/>
    </location>
</feature>
<feature type="chain" id="PRO_0000124526" description="Small ribosomal subunit protein uS7, N-terminally processed">
    <location>
        <begin position="2"/>
        <end position="204"/>
    </location>
</feature>
<feature type="modified residue" description="N-acetylmethionine; in 40S ribosomal protein S5; alternate" evidence="4 11 13 16">
    <location>
        <position position="1"/>
    </location>
</feature>
<feature type="modified residue" description="N-acetylthreonine; in 40S ribosomal protein S5, N-terminally processed" evidence="3 4 11 13 16">
    <location>
        <position position="2"/>
    </location>
</feature>
<feature type="modified residue" description="Phosphothreonine" evidence="14 15">
    <location>
        <position position="14"/>
    </location>
</feature>
<feature type="modified residue" description="N6-acetyllysine; alternate" evidence="12">
    <location>
        <position position="47"/>
    </location>
</feature>
<feature type="modified residue" description="Phosphoserine" evidence="14">
    <location>
        <position position="142"/>
    </location>
</feature>
<feature type="cross-link" description="Glycyl lysine isopeptide (Lys-Gly) (interchain with G-Cter in SUMO2); alternate" evidence="17">
    <location>
        <position position="47"/>
    </location>
</feature>
<feature type="sequence conflict" description="In Ref. 1; AAA85658." evidence="6" ref="1">
    <original>KR</original>
    <variation>NA</variation>
    <location>
        <begin position="59"/>
        <end position="60"/>
    </location>
</feature>
<feature type="turn" evidence="20">
    <location>
        <begin position="20"/>
        <end position="22"/>
    </location>
</feature>
<feature type="strand" evidence="20">
    <location>
        <begin position="23"/>
        <end position="25"/>
    </location>
</feature>
<feature type="turn" evidence="20">
    <location>
        <begin position="33"/>
        <end position="35"/>
    </location>
</feature>
<feature type="helix" evidence="20">
    <location>
        <begin position="36"/>
        <end position="38"/>
    </location>
</feature>
<feature type="strand" evidence="18">
    <location>
        <begin position="42"/>
        <end position="45"/>
    </location>
</feature>
<feature type="strand" evidence="20">
    <location>
        <begin position="48"/>
        <end position="50"/>
    </location>
</feature>
<feature type="helix" evidence="20">
    <location>
        <begin position="56"/>
        <end position="58"/>
    </location>
</feature>
<feature type="helix" evidence="20">
    <location>
        <begin position="62"/>
        <end position="64"/>
    </location>
</feature>
<feature type="strand" evidence="20">
    <location>
        <begin position="65"/>
        <end position="67"/>
    </location>
</feature>
<feature type="helix" evidence="20">
    <location>
        <begin position="68"/>
        <end position="75"/>
    </location>
</feature>
<feature type="helix" evidence="20">
    <location>
        <begin position="80"/>
        <end position="82"/>
    </location>
</feature>
<feature type="helix" evidence="20">
    <location>
        <begin position="86"/>
        <end position="104"/>
    </location>
</feature>
<feature type="helix" evidence="20">
    <location>
        <begin position="108"/>
        <end position="119"/>
    </location>
</feature>
<feature type="strand" evidence="20">
    <location>
        <begin position="122"/>
        <end position="126"/>
    </location>
</feature>
<feature type="strand" evidence="18">
    <location>
        <begin position="131"/>
        <end position="133"/>
    </location>
</feature>
<feature type="strand" evidence="20">
    <location>
        <begin position="137"/>
        <end position="141"/>
    </location>
</feature>
<feature type="helix" evidence="20">
    <location>
        <begin position="143"/>
        <end position="162"/>
    </location>
</feature>
<feature type="strand" evidence="20">
    <location>
        <begin position="165"/>
        <end position="167"/>
    </location>
</feature>
<feature type="helix" evidence="20">
    <location>
        <begin position="169"/>
        <end position="181"/>
    </location>
</feature>
<feature type="strand" evidence="19">
    <location>
        <begin position="185"/>
        <end position="187"/>
    </location>
</feature>
<feature type="helix" evidence="20">
    <location>
        <begin position="188"/>
        <end position="201"/>
    </location>
</feature>
<evidence type="ECO:0000269" key="1">
    <source>
    </source>
</evidence>
<evidence type="ECO:0000269" key="2">
    <source>
    </source>
</evidence>
<evidence type="ECO:0000269" key="3">
    <source ref="6"/>
</evidence>
<evidence type="ECO:0000269" key="4">
    <source ref="7"/>
</evidence>
<evidence type="ECO:0000303" key="5">
    <source>
    </source>
</evidence>
<evidence type="ECO:0000305" key="6"/>
<evidence type="ECO:0000312" key="7">
    <source>
        <dbReference type="HGNC" id="HGNC:10426"/>
    </source>
</evidence>
<evidence type="ECO:0007744" key="8">
    <source>
        <dbReference type="PDB" id="7MQ8"/>
    </source>
</evidence>
<evidence type="ECO:0007744" key="9">
    <source>
        <dbReference type="PDB" id="7MQ9"/>
    </source>
</evidence>
<evidence type="ECO:0007744" key="10">
    <source>
        <dbReference type="PDB" id="7MQA"/>
    </source>
</evidence>
<evidence type="ECO:0007744" key="11">
    <source>
    </source>
</evidence>
<evidence type="ECO:0007744" key="12">
    <source>
    </source>
</evidence>
<evidence type="ECO:0007744" key="13">
    <source>
    </source>
</evidence>
<evidence type="ECO:0007744" key="14">
    <source>
    </source>
</evidence>
<evidence type="ECO:0007744" key="15">
    <source>
    </source>
</evidence>
<evidence type="ECO:0007744" key="16">
    <source>
    </source>
</evidence>
<evidence type="ECO:0007744" key="17">
    <source>
    </source>
</evidence>
<evidence type="ECO:0007829" key="18">
    <source>
        <dbReference type="PDB" id="6ZLW"/>
    </source>
</evidence>
<evidence type="ECO:0007829" key="19">
    <source>
        <dbReference type="PDB" id="7K5I"/>
    </source>
</evidence>
<evidence type="ECO:0007829" key="20">
    <source>
        <dbReference type="PDB" id="7R4X"/>
    </source>
</evidence>
<gene>
    <name evidence="7" type="primary">RPS5</name>
</gene>
<comment type="function">
    <text evidence="1 2">Component of the small ribosomal subunit (PubMed:23636399). The ribosome is a large ribonucleoprotein complex responsible for the synthesis of proteins in the cell (PubMed:23636399). Part of the small subunit (SSU) processome, first precursor of the small eukaryotic ribosomal subunit. During the assembly of the SSU processome in the nucleolus, many ribosome biogenesis factors, an RNA chaperone and ribosomal proteins associate with the nascent pre-rRNA and work in concert to generate RNA folding, modifications, rearrangements and cleavage as well as targeted degradation of pre-ribosomal RNA by the RNA exosome (PubMed:34516797).</text>
</comment>
<comment type="subunit">
    <text evidence="1 2">Component of the small ribosomal subunit. Part of the small subunit (SSU) processome, composed of more than 70 proteins and the RNA chaperone small nucleolar RNA (snoRNA) U3 (PubMed:34516797).</text>
</comment>
<comment type="interaction">
    <interactant intactId="EBI-350569">
        <id>P46782</id>
    </interactant>
    <interactant intactId="EBI-930964">
        <id>P54253</id>
        <label>ATXN1</label>
    </interactant>
    <organismsDiffer>false</organismsDiffer>
    <experiments>3</experiments>
</comment>
<comment type="interaction">
    <interactant intactId="EBI-350569">
        <id>P46782</id>
    </interactant>
    <interactant intactId="EBI-466029">
        <id>P42858</id>
        <label>HTT</label>
    </interactant>
    <organismsDiffer>false</organismsDiffer>
    <experiments>3</experiments>
</comment>
<comment type="interaction">
    <interactant intactId="EBI-350569">
        <id>P46782</id>
    </interactant>
    <interactant intactId="EBI-1055254">
        <id>Q8WXH2</id>
        <label>JPH3</label>
    </interactant>
    <organismsDiffer>false</organismsDiffer>
    <experiments>3</experiments>
</comment>
<comment type="subcellular location">
    <subcellularLocation>
        <location evidence="1">Cytoplasm</location>
    </subcellularLocation>
    <subcellularLocation>
        <location evidence="2">Nucleus</location>
        <location evidence="2">Nucleolus</location>
    </subcellularLocation>
</comment>
<comment type="similarity">
    <text evidence="6">Belongs to the universal ribosomal protein uS7 family.</text>
</comment>
<accession>P46782</accession>
<accession>B2R4T2</accession>
<accession>Q96BN0</accession>
<sequence>MTEWETAAPAVAETPDIKLFGKWSTDDVQINDISLQDYIAVKEKYAKYLPHSAGRYAAKRFRKAQCPIVERLTNSMMMHGRNNGKKLMTVRIVKHAFEIIHLLTGENPLQVLVNAIINSGPREDSTRIGRAGTVRRQAVDVSPLRRVNQAIWLLCTGAREAAFRNIKTIAECLADELINAAKGSSNSYAIKKKDELERVAKSNR</sequence>
<name>RS5_HUMAN</name>